<reference key="1">
    <citation type="journal article" date="2006" name="BMC Genomics">
        <title>Comparative genome analysis: selection pressure on the Borrelia vls cassettes is essential for infectivity.</title>
        <authorList>
            <person name="Gloeckner G."/>
            <person name="Schulte-Spechtel U."/>
            <person name="Schilhabel M."/>
            <person name="Felder M."/>
            <person name="Suehnel J."/>
            <person name="Wilske B."/>
            <person name="Platzer M."/>
        </authorList>
    </citation>
    <scope>NUCLEOTIDE SEQUENCE [LARGE SCALE GENOMIC DNA]</scope>
    <source>
        <strain>PKo</strain>
    </source>
</reference>
<reference key="2">
    <citation type="journal article" date="2011" name="J. Bacteriol.">
        <title>Whole-genome sequences of two Borrelia afzelii and two Borrelia garinii Lyme disease agent isolates.</title>
        <authorList>
            <person name="Casjens S.R."/>
            <person name="Mongodin E.F."/>
            <person name="Qiu W.G."/>
            <person name="Dunn J.J."/>
            <person name="Luft B.J."/>
            <person name="Fraser-Liggett C.M."/>
            <person name="Schutzer S.E."/>
        </authorList>
    </citation>
    <scope>NUCLEOTIDE SEQUENCE [LARGE SCALE GENOMIC DNA]</scope>
    <source>
        <strain>PKo</strain>
    </source>
</reference>
<protein>
    <recommendedName>
        <fullName>Alanine--tRNA ligase</fullName>
        <ecNumber>6.1.1.7</ecNumber>
    </recommendedName>
    <alternativeName>
        <fullName>Alanyl-tRNA synthetase</fullName>
        <shortName>AlaRS</shortName>
    </alternativeName>
</protein>
<organism>
    <name type="scientific">Borreliella afzelii (strain PKo)</name>
    <name type="common">Borrelia afzelii</name>
    <dbReference type="NCBI Taxonomy" id="390236"/>
    <lineage>
        <taxon>Bacteria</taxon>
        <taxon>Pseudomonadati</taxon>
        <taxon>Spirochaetota</taxon>
        <taxon>Spirochaetia</taxon>
        <taxon>Spirochaetales</taxon>
        <taxon>Borreliaceae</taxon>
        <taxon>Borreliella</taxon>
    </lineage>
</organism>
<name>SYA_BORAP</name>
<evidence type="ECO:0000250" key="1"/>
<evidence type="ECO:0000255" key="2"/>
<evidence type="ECO:0000305" key="3"/>
<gene>
    <name type="primary">alaS</name>
    <name type="ordered locus">BAPKO_0228</name>
    <name type="ordered locus">BafPKo_0223</name>
</gene>
<proteinExistence type="inferred from homology"/>
<accession>Q0SNU2</accession>
<accession>G0IR64</accession>
<dbReference type="EC" id="6.1.1.7"/>
<dbReference type="EMBL" id="CP000395">
    <property type="protein sequence ID" value="ABH01486.1"/>
    <property type="molecule type" value="Genomic_DNA"/>
</dbReference>
<dbReference type="EMBL" id="CP002933">
    <property type="protein sequence ID" value="AEL69450.1"/>
    <property type="molecule type" value="Genomic_DNA"/>
</dbReference>
<dbReference type="RefSeq" id="WP_011600898.1">
    <property type="nucleotide sequence ID" value="NZ_CP160066.1"/>
</dbReference>
<dbReference type="SMR" id="Q0SNU2"/>
<dbReference type="STRING" id="29518.BLA32_03195"/>
<dbReference type="KEGG" id="baf:BAPKO_0228"/>
<dbReference type="KEGG" id="bafz:BafPKo_0223"/>
<dbReference type="PATRIC" id="fig|390236.22.peg.216"/>
<dbReference type="eggNOG" id="COG0013">
    <property type="taxonomic scope" value="Bacteria"/>
</dbReference>
<dbReference type="HOGENOM" id="CLU_004485_0_2_12"/>
<dbReference type="OrthoDB" id="9803884at2"/>
<dbReference type="Proteomes" id="UP000005216">
    <property type="component" value="Chromosome"/>
</dbReference>
<dbReference type="GO" id="GO:0005829">
    <property type="term" value="C:cytosol"/>
    <property type="evidence" value="ECO:0007669"/>
    <property type="project" value="TreeGrafter"/>
</dbReference>
<dbReference type="GO" id="GO:0004813">
    <property type="term" value="F:alanine-tRNA ligase activity"/>
    <property type="evidence" value="ECO:0007669"/>
    <property type="project" value="UniProtKB-UniRule"/>
</dbReference>
<dbReference type="GO" id="GO:0002161">
    <property type="term" value="F:aminoacyl-tRNA deacylase activity"/>
    <property type="evidence" value="ECO:0007669"/>
    <property type="project" value="TreeGrafter"/>
</dbReference>
<dbReference type="GO" id="GO:0005524">
    <property type="term" value="F:ATP binding"/>
    <property type="evidence" value="ECO:0007669"/>
    <property type="project" value="UniProtKB-UniRule"/>
</dbReference>
<dbReference type="GO" id="GO:0000049">
    <property type="term" value="F:tRNA binding"/>
    <property type="evidence" value="ECO:0007669"/>
    <property type="project" value="UniProtKB-KW"/>
</dbReference>
<dbReference type="GO" id="GO:0008270">
    <property type="term" value="F:zinc ion binding"/>
    <property type="evidence" value="ECO:0007669"/>
    <property type="project" value="UniProtKB-UniRule"/>
</dbReference>
<dbReference type="GO" id="GO:0006419">
    <property type="term" value="P:alanyl-tRNA aminoacylation"/>
    <property type="evidence" value="ECO:0007669"/>
    <property type="project" value="UniProtKB-UniRule"/>
</dbReference>
<dbReference type="CDD" id="cd00673">
    <property type="entry name" value="AlaRS_core"/>
    <property type="match status" value="1"/>
</dbReference>
<dbReference type="FunFam" id="3.30.980.10:FF:000004">
    <property type="entry name" value="Alanine--tRNA ligase, cytoplasmic"/>
    <property type="match status" value="1"/>
</dbReference>
<dbReference type="Gene3D" id="3.30.54.20">
    <property type="match status" value="1"/>
</dbReference>
<dbReference type="Gene3D" id="3.30.930.10">
    <property type="entry name" value="Bira Bifunctional Protein, Domain 2"/>
    <property type="match status" value="1"/>
</dbReference>
<dbReference type="Gene3D" id="3.30.980.10">
    <property type="entry name" value="Threonyl-trna Synthetase, Chain A, domain 2"/>
    <property type="match status" value="1"/>
</dbReference>
<dbReference type="HAMAP" id="MF_00036_B">
    <property type="entry name" value="Ala_tRNA_synth_B"/>
    <property type="match status" value="1"/>
</dbReference>
<dbReference type="InterPro" id="IPR045864">
    <property type="entry name" value="aa-tRNA-synth_II/BPL/LPL"/>
</dbReference>
<dbReference type="InterPro" id="IPR002318">
    <property type="entry name" value="Ala-tRNA-lgiase_IIc"/>
</dbReference>
<dbReference type="InterPro" id="IPR018162">
    <property type="entry name" value="Ala-tRNA-ligase_IIc_anticod-bd"/>
</dbReference>
<dbReference type="InterPro" id="IPR018165">
    <property type="entry name" value="Ala-tRNA-synth_IIc_core"/>
</dbReference>
<dbReference type="InterPro" id="IPR018164">
    <property type="entry name" value="Ala-tRNA-synth_IIc_N"/>
</dbReference>
<dbReference type="InterPro" id="IPR050058">
    <property type="entry name" value="Ala-tRNA_ligase"/>
</dbReference>
<dbReference type="InterPro" id="IPR023033">
    <property type="entry name" value="Ala_tRNA_ligase_euk/bac"/>
</dbReference>
<dbReference type="InterPro" id="IPR018163">
    <property type="entry name" value="Thr/Ala-tRNA-synth_IIc_edit"/>
</dbReference>
<dbReference type="InterPro" id="IPR012947">
    <property type="entry name" value="tRNA_SAD"/>
</dbReference>
<dbReference type="NCBIfam" id="TIGR00344">
    <property type="entry name" value="alaS"/>
    <property type="match status" value="1"/>
</dbReference>
<dbReference type="NCBIfam" id="NF002436">
    <property type="entry name" value="PRK01584.1"/>
    <property type="match status" value="1"/>
</dbReference>
<dbReference type="PANTHER" id="PTHR11777:SF9">
    <property type="entry name" value="ALANINE--TRNA LIGASE, CYTOPLASMIC"/>
    <property type="match status" value="1"/>
</dbReference>
<dbReference type="PANTHER" id="PTHR11777">
    <property type="entry name" value="ALANYL-TRNA SYNTHETASE"/>
    <property type="match status" value="1"/>
</dbReference>
<dbReference type="Pfam" id="PF01411">
    <property type="entry name" value="tRNA-synt_2c"/>
    <property type="match status" value="1"/>
</dbReference>
<dbReference type="Pfam" id="PF07973">
    <property type="entry name" value="tRNA_SAD"/>
    <property type="match status" value="1"/>
</dbReference>
<dbReference type="PRINTS" id="PR00980">
    <property type="entry name" value="TRNASYNTHALA"/>
</dbReference>
<dbReference type="SMART" id="SM00863">
    <property type="entry name" value="tRNA_SAD"/>
    <property type="match status" value="1"/>
</dbReference>
<dbReference type="SUPFAM" id="SSF55681">
    <property type="entry name" value="Class II aaRS and biotin synthetases"/>
    <property type="match status" value="1"/>
</dbReference>
<dbReference type="SUPFAM" id="SSF101353">
    <property type="entry name" value="Putative anticodon-binding domain of alanyl-tRNA synthetase (AlaRS)"/>
    <property type="match status" value="1"/>
</dbReference>
<dbReference type="SUPFAM" id="SSF55186">
    <property type="entry name" value="ThrRS/AlaRS common domain"/>
    <property type="match status" value="1"/>
</dbReference>
<dbReference type="PROSITE" id="PS50860">
    <property type="entry name" value="AA_TRNA_LIGASE_II_ALA"/>
    <property type="match status" value="1"/>
</dbReference>
<comment type="function">
    <text evidence="1">Catalyzes the attachment of alanine to tRNA(Ala) in a two-step reaction: alanine is first activated by ATP to form Ala-AMP and then transferred to the acceptor end of tRNA(Ala). Also edits incorrectly charged Ser-tRNA(Ala) and Gly-tRNA(Ala) via its editing domain (By similarity).</text>
</comment>
<comment type="catalytic activity">
    <reaction>
        <text>tRNA(Ala) + L-alanine + ATP = L-alanyl-tRNA(Ala) + AMP + diphosphate</text>
        <dbReference type="Rhea" id="RHEA:12540"/>
        <dbReference type="Rhea" id="RHEA-COMP:9657"/>
        <dbReference type="Rhea" id="RHEA-COMP:9923"/>
        <dbReference type="ChEBI" id="CHEBI:30616"/>
        <dbReference type="ChEBI" id="CHEBI:33019"/>
        <dbReference type="ChEBI" id="CHEBI:57972"/>
        <dbReference type="ChEBI" id="CHEBI:78442"/>
        <dbReference type="ChEBI" id="CHEBI:78497"/>
        <dbReference type="ChEBI" id="CHEBI:456215"/>
        <dbReference type="EC" id="6.1.1.7"/>
    </reaction>
</comment>
<comment type="cofactor">
    <cofactor evidence="1">
        <name>Zn(2+)</name>
        <dbReference type="ChEBI" id="CHEBI:29105"/>
    </cofactor>
    <text evidence="1">Binds 1 zinc ion per subunit.</text>
</comment>
<comment type="subcellular location">
    <subcellularLocation>
        <location evidence="1">Cytoplasm</location>
    </subcellularLocation>
</comment>
<comment type="domain">
    <text evidence="1">Consists of two domains; the N-terminal catalytic domain (in this organism this is shorter than usual) and the editing domain; the C-terminal C-Ala domain found in most orthologs is missing. The editing domain removes incorrectly charged amino acids (By similarity).</text>
</comment>
<comment type="similarity">
    <text evidence="3">Belongs to the class-II aminoacyl-tRNA synthetase family.</text>
</comment>
<keyword id="KW-0030">Aminoacyl-tRNA synthetase</keyword>
<keyword id="KW-0067">ATP-binding</keyword>
<keyword id="KW-0963">Cytoplasm</keyword>
<keyword id="KW-0436">Ligase</keyword>
<keyword id="KW-0479">Metal-binding</keyword>
<keyword id="KW-0547">Nucleotide-binding</keyword>
<keyword id="KW-0648">Protein biosynthesis</keyword>
<keyword id="KW-0694">RNA-binding</keyword>
<keyword id="KW-0820">tRNA-binding</keyword>
<keyword id="KW-0862">Zinc</keyword>
<feature type="chain" id="PRO_0000347510" description="Alanine--tRNA ligase">
    <location>
        <begin position="1"/>
        <end position="594"/>
    </location>
</feature>
<feature type="binding site" evidence="2">
    <location>
        <position position="456"/>
    </location>
    <ligand>
        <name>Zn(2+)</name>
        <dbReference type="ChEBI" id="CHEBI:29105"/>
    </ligand>
</feature>
<feature type="binding site" evidence="2">
    <location>
        <position position="460"/>
    </location>
    <ligand>
        <name>Zn(2+)</name>
        <dbReference type="ChEBI" id="CHEBI:29105"/>
    </ligand>
</feature>
<feature type="binding site" evidence="2">
    <location>
        <position position="558"/>
    </location>
    <ligand>
        <name>Zn(2+)</name>
        <dbReference type="ChEBI" id="CHEBI:29105"/>
    </ligand>
</feature>
<feature type="binding site" evidence="2">
    <location>
        <position position="562"/>
    </location>
    <ligand>
        <name>Zn(2+)</name>
        <dbReference type="ChEBI" id="CHEBI:29105"/>
    </ligand>
</feature>
<sequence>MTLDKLRKKYIDFFKSKKHFEIMGKSLVPENDPTVLFNTAGMQPLIPYLLGEVHPSGDMLVNVQKCLRTGDIDEVGDLSHLTFFEMLGNWSLGAYFKEYSVKCSFEFLTSSEYLNIPKDRLYVSVFEGDQEIPRDTETAKVWESLGIPKDRIYYLSKDHNFWGPVGSKGPCGPDTEIYVDTGKIKCSINCNVTCSCGKYFEIWNNVFMQYNKDENGNYMELDRKCVDTGMGLERTIAFLQGKSSVYDTDAFMPIIKRIEFISGKIYGQKEDDDRCIRIISDHIKAACFILADSSGVFPSNLGQGYVLRRLIRRSIRYAKKLGIKSHFLADLVDSVETIYRSFYNELTEKKDFIKKELSTEEEKFFKTLFQGEQEFIKITRNLSSKTIPGDIAFKLYDTYGFPYELTEELAFEYGFDIDKSGFNEYFKKHQKTSKKGGDKVFKGGLADYTYETTKLHTATHLLHKALQLVLGDHVKQKGSNITAERLRFDFVHSKKMTDDEIKKVEDIVNLQIKNSLSVKKSIMELSEAREKGAMALFGEKYDNLVSVYEIDGFSLEVCGGPHVENTNELGTFKIQKEQSSSSGIRRIKAILIDE</sequence>